<sequence length="851" mass="97852">MQRLQRGLVLLLWAGLGILAITALASFYVDLAWFAELNALPVLWTRVLARWGLGLGAFAFALAVVGSNIRACWRGASTAGAWAIALGLSGGLAWSLSQHWFALLLWLHQVPVGESDPIFGRDLGFFLFGLPFWETLQQWCFNLVLLTLITVALIYLVELGLSEQRLTLALSLFAQRHLLILGGALFLLRAWGHWLERYELLYSTRGVVFGAGFADVHATLPATTLMSGVAFLTAVGFWALARQGIRFNLPLFKSWCPAWASSLLAPALLWGAYLGFGLLTTRLYPQLLQTLLVTPNELELERPYIEHNIRFTRAGFGLAEVEVKPFPEEGSLTWEILQQNQSTLRNVRLWDTEPLLATYRQLQEIRPYYQFPYVDVDRYRIGGELRQVMHAARELDFAQVPPAAQTWVNRRFFYTHGYGLTLSPVNVVTAEGLPDFFLSDIPPRVSPRYPEVAQVLRVEQPALYYSELTTTDVFVGAEARELDYPAADRYVYSSYRGTGGVPIPHLWQRLLYAWHFRDLRILLSRELSPSTRFLYRRQIRERVRQVMPFLLYDQDPYLVIQGGRLYWFFDAYTTSSRYPYSEHLPGFPFNYIRNSVKAVLDAYNGSIDWYIADPRDPLIQAYARIYPTLFKPLEAMPEPLRQHIRYPQDLFRVQVQQFATYHMTDPRVFYNREDQWQIPNQFRKRRRLPMQPQYLILTLPEDPQKGSPNQPEFVLLSPFTPLNKQNMVAWMAARCDGENYGKLLVYEFSKQRLIYGPEQVEARVNQDPAISEQIALWNEHGSRVNLGTLLVIPIETSLLYIQPLYLEAEQGRLPQLTRVIAAYEDRVVMEPTLSQALEALFSPTGSRRSNR</sequence>
<dbReference type="EMBL" id="CP000239">
    <property type="protein sequence ID" value="ABC99963.1"/>
    <property type="molecule type" value="Genomic_DNA"/>
</dbReference>
<dbReference type="RefSeq" id="WP_011430639.1">
    <property type="nucleotide sequence ID" value="NC_007775.1"/>
</dbReference>
<dbReference type="STRING" id="321327.CYA_1810"/>
<dbReference type="KEGG" id="cya:CYA_1810"/>
<dbReference type="eggNOG" id="COG1615">
    <property type="taxonomic scope" value="Bacteria"/>
</dbReference>
<dbReference type="HOGENOM" id="CLU_007733_0_0_3"/>
<dbReference type="OrthoDB" id="9763654at2"/>
<dbReference type="Proteomes" id="UP000008818">
    <property type="component" value="Chromosome"/>
</dbReference>
<dbReference type="GO" id="GO:0005576">
    <property type="term" value="C:extracellular region"/>
    <property type="evidence" value="ECO:0007669"/>
    <property type="project" value="TreeGrafter"/>
</dbReference>
<dbReference type="GO" id="GO:0005886">
    <property type="term" value="C:plasma membrane"/>
    <property type="evidence" value="ECO:0007669"/>
    <property type="project" value="UniProtKB-SubCell"/>
</dbReference>
<dbReference type="HAMAP" id="MF_01600">
    <property type="entry name" value="UPF0182"/>
    <property type="match status" value="1"/>
</dbReference>
<dbReference type="InterPro" id="IPR005372">
    <property type="entry name" value="UPF0182"/>
</dbReference>
<dbReference type="NCBIfam" id="NF002707">
    <property type="entry name" value="PRK02509.1"/>
    <property type="match status" value="1"/>
</dbReference>
<dbReference type="PANTHER" id="PTHR39344">
    <property type="entry name" value="UPF0182 PROTEIN SLL1060"/>
    <property type="match status" value="1"/>
</dbReference>
<dbReference type="PANTHER" id="PTHR39344:SF1">
    <property type="entry name" value="UPF0182 PROTEIN SLL1060"/>
    <property type="match status" value="1"/>
</dbReference>
<dbReference type="Pfam" id="PF03699">
    <property type="entry name" value="UPF0182"/>
    <property type="match status" value="1"/>
</dbReference>
<protein>
    <recommendedName>
        <fullName evidence="1">UPF0182 protein CYA_1810</fullName>
    </recommendedName>
</protein>
<keyword id="KW-1003">Cell membrane</keyword>
<keyword id="KW-0472">Membrane</keyword>
<keyword id="KW-0812">Transmembrane</keyword>
<keyword id="KW-1133">Transmembrane helix</keyword>
<evidence type="ECO:0000255" key="1">
    <source>
        <dbReference type="HAMAP-Rule" id="MF_01600"/>
    </source>
</evidence>
<gene>
    <name type="ordered locus">CYA_1810</name>
</gene>
<reference key="1">
    <citation type="journal article" date="2007" name="ISME J.">
        <title>Population level functional diversity in a microbial community revealed by comparative genomic and metagenomic analyses.</title>
        <authorList>
            <person name="Bhaya D."/>
            <person name="Grossman A.R."/>
            <person name="Steunou A.-S."/>
            <person name="Khuri N."/>
            <person name="Cohan F.M."/>
            <person name="Hamamura N."/>
            <person name="Melendrez M.C."/>
            <person name="Bateson M.M."/>
            <person name="Ward D.M."/>
            <person name="Heidelberg J.F."/>
        </authorList>
    </citation>
    <scope>NUCLEOTIDE SEQUENCE [LARGE SCALE GENOMIC DNA]</scope>
    <source>
        <strain>JA-3-3Ab</strain>
    </source>
</reference>
<organism>
    <name type="scientific">Synechococcus sp. (strain JA-3-3Ab)</name>
    <name type="common">Cyanobacteria bacterium Yellowstone A-Prime</name>
    <dbReference type="NCBI Taxonomy" id="321327"/>
    <lineage>
        <taxon>Bacteria</taxon>
        <taxon>Bacillati</taxon>
        <taxon>Cyanobacteriota</taxon>
        <taxon>Cyanophyceae</taxon>
        <taxon>Synechococcales</taxon>
        <taxon>Synechococcaceae</taxon>
        <taxon>Synechococcus</taxon>
    </lineage>
</organism>
<comment type="subcellular location">
    <subcellularLocation>
        <location evidence="1">Cell membrane</location>
        <topology evidence="1">Multi-pass membrane protein</topology>
    </subcellularLocation>
</comment>
<comment type="similarity">
    <text evidence="1">Belongs to the UPF0182 family.</text>
</comment>
<proteinExistence type="inferred from homology"/>
<name>Y1810_SYNJA</name>
<feature type="chain" id="PRO_0000291299" description="UPF0182 protein CYA_1810">
    <location>
        <begin position="1"/>
        <end position="851"/>
    </location>
</feature>
<feature type="transmembrane region" description="Helical" evidence="1">
    <location>
        <begin position="7"/>
        <end position="27"/>
    </location>
</feature>
<feature type="transmembrane region" description="Helical" evidence="1">
    <location>
        <begin position="47"/>
        <end position="67"/>
    </location>
</feature>
<feature type="transmembrane region" description="Helical" evidence="1">
    <location>
        <begin position="76"/>
        <end position="96"/>
    </location>
</feature>
<feature type="transmembrane region" description="Helical" evidence="1">
    <location>
        <begin position="141"/>
        <end position="161"/>
    </location>
</feature>
<feature type="transmembrane region" description="Helical" evidence="1">
    <location>
        <begin position="168"/>
        <end position="188"/>
    </location>
</feature>
<feature type="transmembrane region" description="Helical" evidence="1">
    <location>
        <begin position="220"/>
        <end position="240"/>
    </location>
</feature>
<feature type="transmembrane region" description="Helical" evidence="1">
    <location>
        <begin position="259"/>
        <end position="279"/>
    </location>
</feature>
<accession>Q2JTM9</accession>